<reference key="1">
    <citation type="journal article" date="2017" name="Sci. Rep.">
        <title>Transcriptome and metabolome profiling of Narcissus pseudonarcissus 'King Alfred' reveal components of Amaryllidaceae alkaloid metabolism.</title>
        <authorList>
            <person name="Singh A."/>
            <person name="Desgagne-Penix I."/>
        </authorList>
    </citation>
    <scope>NUCLEOTIDE SEQUENCE [MRNA]</scope>
    <scope>REVIEW ON THE AMARYLLIDACEAE ALKALOID METABOLISM</scope>
    <scope>PATHWAY</scope>
    <scope>TISSUE SPECIFICITY</scope>
    <scope>GENE FAMILY</scope>
    <scope>NOMENCLATURE</scope>
    <source>
        <strain>cv. King Alfred</strain>
        <tissue>Bulb</tissue>
    </source>
</reference>
<feature type="chain" id="PRO_0000450637" description="Hydroxycinnamoyltransferase">
    <location>
        <begin position="1"/>
        <end position="436"/>
    </location>
</feature>
<feature type="active site" description="Proton acceptor" evidence="2">
    <location>
        <position position="154"/>
    </location>
</feature>
<feature type="active site" description="Proton acceptor" evidence="2">
    <location>
        <position position="383"/>
    </location>
</feature>
<organism>
    <name type="scientific">Narcissus pseudonarcissus</name>
    <name type="common">Daffodil</name>
    <dbReference type="NCBI Taxonomy" id="39639"/>
    <lineage>
        <taxon>Eukaryota</taxon>
        <taxon>Viridiplantae</taxon>
        <taxon>Streptophyta</taxon>
        <taxon>Embryophyta</taxon>
        <taxon>Tracheophyta</taxon>
        <taxon>Spermatophyta</taxon>
        <taxon>Magnoliopsida</taxon>
        <taxon>Liliopsida</taxon>
        <taxon>Asparagales</taxon>
        <taxon>Amaryllidaceae</taxon>
        <taxon>Amaryllidoideae</taxon>
        <taxon>Narcissus</taxon>
    </lineage>
</organism>
<protein>
    <recommendedName>
        <fullName evidence="4">Hydroxycinnamoyltransferase</fullName>
        <ecNumber evidence="6">2.3.1.-</ecNumber>
    </recommendedName>
</protein>
<name>HCT_NARPS</name>
<gene>
    <name evidence="4" type="primary">HCT</name>
</gene>
<evidence type="ECO:0000250" key="1">
    <source>
        <dbReference type="UniProtKB" id="Q5SMM6"/>
    </source>
</evidence>
<evidence type="ECO:0000250" key="2">
    <source>
        <dbReference type="UniProtKB" id="Q8W1W9"/>
    </source>
</evidence>
<evidence type="ECO:0000269" key="3">
    <source>
    </source>
</evidence>
<evidence type="ECO:0000303" key="4">
    <source>
    </source>
</evidence>
<evidence type="ECO:0000305" key="5"/>
<evidence type="ECO:0000312" key="6">
    <source>
        <dbReference type="EMBL" id="AUG71940.1"/>
    </source>
</evidence>
<dbReference type="EC" id="2.3.1.-" evidence="6"/>
<dbReference type="EMBL" id="MF416095">
    <property type="protein sequence ID" value="AUG71940.1"/>
    <property type="molecule type" value="mRNA"/>
</dbReference>
<dbReference type="SMR" id="A0A2H5AIZ1"/>
<dbReference type="GO" id="GO:0016747">
    <property type="term" value="F:acyltransferase activity, transferring groups other than amino-acyl groups"/>
    <property type="evidence" value="ECO:0007669"/>
    <property type="project" value="TreeGrafter"/>
</dbReference>
<dbReference type="GO" id="GO:0009820">
    <property type="term" value="P:alkaloid metabolic process"/>
    <property type="evidence" value="ECO:0007669"/>
    <property type="project" value="UniProtKB-KW"/>
</dbReference>
<dbReference type="FunFam" id="3.30.559.10:FF:000015">
    <property type="entry name" value="Spermidine hydroxycinnamoyl transferase"/>
    <property type="match status" value="1"/>
</dbReference>
<dbReference type="FunFam" id="3.30.559.10:FF:000008">
    <property type="entry name" value="Tryptamine hydroxycinnamoyl transferase"/>
    <property type="match status" value="1"/>
</dbReference>
<dbReference type="Gene3D" id="3.30.559.10">
    <property type="entry name" value="Chloramphenicol acetyltransferase-like domain"/>
    <property type="match status" value="2"/>
</dbReference>
<dbReference type="InterPro" id="IPR023213">
    <property type="entry name" value="CAT-like_dom_sf"/>
</dbReference>
<dbReference type="InterPro" id="IPR050317">
    <property type="entry name" value="Plant_Fungal_Acyltransferase"/>
</dbReference>
<dbReference type="PANTHER" id="PTHR31642:SF11">
    <property type="entry name" value="SHIKIMATE O-HYDROXYCINNAMOYLTRANSFERASE"/>
    <property type="match status" value="1"/>
</dbReference>
<dbReference type="PANTHER" id="PTHR31642">
    <property type="entry name" value="TRICHOTHECENE 3-O-ACETYLTRANSFERASE"/>
    <property type="match status" value="1"/>
</dbReference>
<dbReference type="Pfam" id="PF02458">
    <property type="entry name" value="Transferase"/>
    <property type="match status" value="1"/>
</dbReference>
<comment type="function">
    <text evidence="1">Hydroxycinnamoyl transferase that catalyzes the transfer of an acyl from p-coumaryol-CoA to various acyl acceptors. Can use feruloyl-CoA and caffeoyl-CoA as acyl donors.</text>
</comment>
<comment type="pathway">
    <text evidence="4">Phenylpropanoid metabolism.</text>
</comment>
<comment type="tissue specificity">
    <text evidence="3">Mostly expressed in stems, and, to a lower extent, in bulbs.</text>
</comment>
<comment type="similarity">
    <text evidence="5">Belongs to the plant acyltransferase family.</text>
</comment>
<keyword id="KW-0012">Acyltransferase</keyword>
<keyword id="KW-0017">Alkaloid metabolism</keyword>
<keyword id="KW-0808">Transferase</keyword>
<sequence>MIINIKETTMVRPSQPTPSQRLWNSNLDLVVPRFHTPSVYFYRRPGNASDFFDARVLKEALGRALVPFYPMAGRLARDEDGRVEIDCNGEGVRFVVAETDSAIDEFGDFAPTMELKKLIPKVEYGDDISAFPLLVLQITHFKCGGTSLGVGMQHHVADGASGLHFINSWSDIARGLDIAVPPFIDRSLLRARDPPSPSFPHIEYQPAPSMNTSPAPIQDPTVKSDPTATAVSIFKLTKQQLDLLKSRVSAKYSSYALVAGHVWRCTSIARGLPDDQRTKLYCATDGRARLQPPLPSGYFGNVIFTATPVADAGEITGEDSGLEAAAGRIQRALMRMDDEYLRSALDYLELQPDLSKLVRGAHTFRCPNIGLTSWTRLPIHDADFGWGRPIFMGPGGIAYEGLAFMLPSSEGDGSLSIAISLQAEHMIKFQKLLYEI</sequence>
<proteinExistence type="evidence at transcript level"/>
<accession>A0A2H5AIZ1</accession>